<organism>
    <name type="scientific">Archaeoglobus fulgidus (strain ATCC 49558 / DSM 4304 / JCM 9628 / NBRC 100126 / VC-16)</name>
    <dbReference type="NCBI Taxonomy" id="224325"/>
    <lineage>
        <taxon>Archaea</taxon>
        <taxon>Methanobacteriati</taxon>
        <taxon>Methanobacteriota</taxon>
        <taxon>Archaeoglobi</taxon>
        <taxon>Archaeoglobales</taxon>
        <taxon>Archaeoglobaceae</taxon>
        <taxon>Archaeoglobus</taxon>
    </lineage>
</organism>
<dbReference type="EMBL" id="AE000782">
    <property type="protein sequence ID" value="AAB90717.1"/>
    <property type="molecule type" value="Genomic_DNA"/>
</dbReference>
<dbReference type="PIR" id="A69314">
    <property type="entry name" value="A69314"/>
</dbReference>
<dbReference type="RefSeq" id="WP_010878020.1">
    <property type="nucleotide sequence ID" value="NC_000917.1"/>
</dbReference>
<dbReference type="STRING" id="224325.AF_0513"/>
<dbReference type="PaxDb" id="224325-AF_0513"/>
<dbReference type="EnsemblBacteria" id="AAB90717">
    <property type="protein sequence ID" value="AAB90717"/>
    <property type="gene ID" value="AF_0513"/>
</dbReference>
<dbReference type="GeneID" id="1483730"/>
<dbReference type="KEGG" id="afu:AF_0513"/>
<dbReference type="eggNOG" id="arCOG10221">
    <property type="taxonomic scope" value="Archaea"/>
</dbReference>
<dbReference type="HOGENOM" id="CLU_1811371_0_0_2"/>
<dbReference type="OrthoDB" id="49443at2157"/>
<dbReference type="Proteomes" id="UP000002199">
    <property type="component" value="Chromosome"/>
</dbReference>
<sequence>MDKVSYIGPVILDEPEEFSLSEFARQVVAMEAERLYYSNGRIFFIEYDTIHGILDDRLVIVELITYTSFTTVGEYRNWIVYYGNDDTAEYVEKIKDLRGDMTIIPVLRTHDRFIRKIEEQISKGQFRSFASQ</sequence>
<reference key="1">
    <citation type="journal article" date="1997" name="Nature">
        <title>The complete genome sequence of the hyperthermophilic, sulphate-reducing archaeon Archaeoglobus fulgidus.</title>
        <authorList>
            <person name="Klenk H.-P."/>
            <person name="Clayton R.A."/>
            <person name="Tomb J.-F."/>
            <person name="White O."/>
            <person name="Nelson K.E."/>
            <person name="Ketchum K.A."/>
            <person name="Dodson R.J."/>
            <person name="Gwinn M.L."/>
            <person name="Hickey E.K."/>
            <person name="Peterson J.D."/>
            <person name="Richardson D.L."/>
            <person name="Kerlavage A.R."/>
            <person name="Graham D.E."/>
            <person name="Kyrpides N.C."/>
            <person name="Fleischmann R.D."/>
            <person name="Quackenbush J."/>
            <person name="Lee N.H."/>
            <person name="Sutton G.G."/>
            <person name="Gill S.R."/>
            <person name="Kirkness E.F."/>
            <person name="Dougherty B.A."/>
            <person name="McKenney K."/>
            <person name="Adams M.D."/>
            <person name="Loftus B.J."/>
            <person name="Peterson S.N."/>
            <person name="Reich C.I."/>
            <person name="McNeil L.K."/>
            <person name="Badger J.H."/>
            <person name="Glodek A."/>
            <person name="Zhou L."/>
            <person name="Overbeek R."/>
            <person name="Gocayne J.D."/>
            <person name="Weidman J.F."/>
            <person name="McDonald L.A."/>
            <person name="Utterback T.R."/>
            <person name="Cotton M.D."/>
            <person name="Spriggs T."/>
            <person name="Artiach P."/>
            <person name="Kaine B.P."/>
            <person name="Sykes S.M."/>
            <person name="Sadow P.W."/>
            <person name="D'Andrea K.P."/>
            <person name="Bowman C."/>
            <person name="Fujii C."/>
            <person name="Garland S.A."/>
            <person name="Mason T.M."/>
            <person name="Olsen G.J."/>
            <person name="Fraser C.M."/>
            <person name="Smith H.O."/>
            <person name="Woese C.R."/>
            <person name="Venter J.C."/>
        </authorList>
    </citation>
    <scope>NUCLEOTIDE SEQUENCE [LARGE SCALE GENOMIC DNA]</scope>
    <source>
        <strain>ATCC 49558 / DSM 4304 / JCM 9628 / NBRC 100126 / VC-16</strain>
    </source>
</reference>
<name>Y513_ARCFU</name>
<gene>
    <name type="ordered locus">AF_0513</name>
</gene>
<feature type="chain" id="PRO_0000127884" description="Uncharacterized protein AF_0513">
    <location>
        <begin position="1"/>
        <end position="132"/>
    </location>
</feature>
<keyword id="KW-1185">Reference proteome</keyword>
<protein>
    <recommendedName>
        <fullName>Uncharacterized protein AF_0513</fullName>
    </recommendedName>
</protein>
<accession>O29737</accession>
<proteinExistence type="predicted"/>